<evidence type="ECO:0000250" key="1"/>
<evidence type="ECO:0000305" key="2"/>
<gene>
    <name type="primary">polA</name>
    <name type="ordered locus">BB_0548</name>
</gene>
<dbReference type="EC" id="2.7.7.7"/>
<dbReference type="EMBL" id="AE000783">
    <property type="protein sequence ID" value="AAC66909.1"/>
    <property type="molecule type" value="Genomic_DNA"/>
</dbReference>
<dbReference type="PIR" id="C70168">
    <property type="entry name" value="C70168"/>
</dbReference>
<dbReference type="RefSeq" id="NP_212682.1">
    <property type="nucleotide sequence ID" value="NC_001318.1"/>
</dbReference>
<dbReference type="RefSeq" id="WP_010889763.1">
    <property type="nucleotide sequence ID" value="NC_001318.1"/>
</dbReference>
<dbReference type="SMR" id="O51498"/>
<dbReference type="STRING" id="224326.BB_0548"/>
<dbReference type="PaxDb" id="224326-BB_0548"/>
<dbReference type="DNASU" id="1195395"/>
<dbReference type="EnsemblBacteria" id="AAC66909">
    <property type="protein sequence ID" value="AAC66909"/>
    <property type="gene ID" value="BB_0548"/>
</dbReference>
<dbReference type="KEGG" id="bbu:BB_0548"/>
<dbReference type="PATRIC" id="fig|224326.49.peg.939"/>
<dbReference type="HOGENOM" id="CLU_004675_0_0_12"/>
<dbReference type="OrthoDB" id="9806424at2"/>
<dbReference type="Proteomes" id="UP000001807">
    <property type="component" value="Chromosome"/>
</dbReference>
<dbReference type="GO" id="GO:0008408">
    <property type="term" value="F:3'-5' exonuclease activity"/>
    <property type="evidence" value="ECO:0007669"/>
    <property type="project" value="InterPro"/>
</dbReference>
<dbReference type="GO" id="GO:0008409">
    <property type="term" value="F:5'-3' exonuclease activity"/>
    <property type="evidence" value="ECO:0007669"/>
    <property type="project" value="InterPro"/>
</dbReference>
<dbReference type="GO" id="GO:0003677">
    <property type="term" value="F:DNA binding"/>
    <property type="evidence" value="ECO:0007669"/>
    <property type="project" value="UniProtKB-KW"/>
</dbReference>
<dbReference type="GO" id="GO:0003887">
    <property type="term" value="F:DNA-directed DNA polymerase activity"/>
    <property type="evidence" value="ECO:0007669"/>
    <property type="project" value="UniProtKB-KW"/>
</dbReference>
<dbReference type="GO" id="GO:0006261">
    <property type="term" value="P:DNA-templated DNA replication"/>
    <property type="evidence" value="ECO:0007669"/>
    <property type="project" value="InterPro"/>
</dbReference>
<dbReference type="GO" id="GO:0006302">
    <property type="term" value="P:double-strand break repair"/>
    <property type="evidence" value="ECO:0007669"/>
    <property type="project" value="TreeGrafter"/>
</dbReference>
<dbReference type="CDD" id="cd08637">
    <property type="entry name" value="DNA_pol_A_pol_I_C"/>
    <property type="match status" value="1"/>
</dbReference>
<dbReference type="CDD" id="cd06139">
    <property type="entry name" value="DNA_polA_I_Ecoli_like_exo"/>
    <property type="match status" value="1"/>
</dbReference>
<dbReference type="CDD" id="cd09898">
    <property type="entry name" value="H3TH_53EXO"/>
    <property type="match status" value="1"/>
</dbReference>
<dbReference type="CDD" id="cd09859">
    <property type="entry name" value="PIN_53EXO"/>
    <property type="match status" value="1"/>
</dbReference>
<dbReference type="FunFam" id="1.10.150.20:FF:000002">
    <property type="entry name" value="DNA polymerase I"/>
    <property type="match status" value="1"/>
</dbReference>
<dbReference type="FunFam" id="1.10.150.20:FF:000003">
    <property type="entry name" value="DNA polymerase I"/>
    <property type="match status" value="1"/>
</dbReference>
<dbReference type="FunFam" id="1.20.1060.10:FF:000001">
    <property type="entry name" value="DNA polymerase I"/>
    <property type="match status" value="1"/>
</dbReference>
<dbReference type="Gene3D" id="3.30.70.370">
    <property type="match status" value="1"/>
</dbReference>
<dbReference type="Gene3D" id="1.10.150.20">
    <property type="entry name" value="5' to 3' exonuclease, C-terminal subdomain"/>
    <property type="match status" value="2"/>
</dbReference>
<dbReference type="Gene3D" id="3.40.50.1010">
    <property type="entry name" value="5'-nuclease"/>
    <property type="match status" value="1"/>
</dbReference>
<dbReference type="Gene3D" id="3.30.420.10">
    <property type="entry name" value="Ribonuclease H-like superfamily/Ribonuclease H"/>
    <property type="match status" value="1"/>
</dbReference>
<dbReference type="Gene3D" id="1.20.1060.10">
    <property type="entry name" value="Taq DNA Polymerase, Chain T, domain 4"/>
    <property type="match status" value="1"/>
</dbReference>
<dbReference type="InterPro" id="IPR002562">
    <property type="entry name" value="3'-5'_exonuclease_dom"/>
</dbReference>
<dbReference type="InterPro" id="IPR020046">
    <property type="entry name" value="5-3_exonucl_a-hlix_arch_N"/>
</dbReference>
<dbReference type="InterPro" id="IPR002421">
    <property type="entry name" value="5-3_exonuclease"/>
</dbReference>
<dbReference type="InterPro" id="IPR036279">
    <property type="entry name" value="5-3_exonuclease_C_sf"/>
</dbReference>
<dbReference type="InterPro" id="IPR019760">
    <property type="entry name" value="DNA-dir_DNA_pol_A_CS"/>
</dbReference>
<dbReference type="InterPro" id="IPR001098">
    <property type="entry name" value="DNA-dir_DNA_pol_A_palm_dom"/>
</dbReference>
<dbReference type="InterPro" id="IPR043502">
    <property type="entry name" value="DNA/RNA_pol_sf"/>
</dbReference>
<dbReference type="InterPro" id="IPR020045">
    <property type="entry name" value="DNA_polI_H3TH"/>
</dbReference>
<dbReference type="InterPro" id="IPR018320">
    <property type="entry name" value="DNA_polymerase_1"/>
</dbReference>
<dbReference type="InterPro" id="IPR002298">
    <property type="entry name" value="DNA_polymerase_A"/>
</dbReference>
<dbReference type="InterPro" id="IPR008918">
    <property type="entry name" value="HhH2"/>
</dbReference>
<dbReference type="InterPro" id="IPR029060">
    <property type="entry name" value="PIN-like_dom_sf"/>
</dbReference>
<dbReference type="InterPro" id="IPR012337">
    <property type="entry name" value="RNaseH-like_sf"/>
</dbReference>
<dbReference type="InterPro" id="IPR036397">
    <property type="entry name" value="RNaseH_sf"/>
</dbReference>
<dbReference type="NCBIfam" id="TIGR00593">
    <property type="entry name" value="pola"/>
    <property type="match status" value="1"/>
</dbReference>
<dbReference type="NCBIfam" id="NF004397">
    <property type="entry name" value="PRK05755.1"/>
    <property type="match status" value="1"/>
</dbReference>
<dbReference type="PANTHER" id="PTHR10133">
    <property type="entry name" value="DNA POLYMERASE I"/>
    <property type="match status" value="1"/>
</dbReference>
<dbReference type="PANTHER" id="PTHR10133:SF27">
    <property type="entry name" value="DNA POLYMERASE NU"/>
    <property type="match status" value="1"/>
</dbReference>
<dbReference type="Pfam" id="PF01367">
    <property type="entry name" value="5_3_exonuc"/>
    <property type="match status" value="1"/>
</dbReference>
<dbReference type="Pfam" id="PF02739">
    <property type="entry name" value="5_3_exonuc_N"/>
    <property type="match status" value="1"/>
</dbReference>
<dbReference type="Pfam" id="PF00476">
    <property type="entry name" value="DNA_pol_A"/>
    <property type="match status" value="1"/>
</dbReference>
<dbReference type="Pfam" id="PF01612">
    <property type="entry name" value="DNA_pol_A_exo1"/>
    <property type="match status" value="1"/>
</dbReference>
<dbReference type="PRINTS" id="PR00868">
    <property type="entry name" value="DNAPOLI"/>
</dbReference>
<dbReference type="SMART" id="SM00474">
    <property type="entry name" value="35EXOc"/>
    <property type="match status" value="1"/>
</dbReference>
<dbReference type="SMART" id="SM00475">
    <property type="entry name" value="53EXOc"/>
    <property type="match status" value="1"/>
</dbReference>
<dbReference type="SMART" id="SM00279">
    <property type="entry name" value="HhH2"/>
    <property type="match status" value="1"/>
</dbReference>
<dbReference type="SMART" id="SM00482">
    <property type="entry name" value="POLAc"/>
    <property type="match status" value="1"/>
</dbReference>
<dbReference type="SUPFAM" id="SSF47807">
    <property type="entry name" value="5' to 3' exonuclease, C-terminal subdomain"/>
    <property type="match status" value="1"/>
</dbReference>
<dbReference type="SUPFAM" id="SSF56672">
    <property type="entry name" value="DNA/RNA polymerases"/>
    <property type="match status" value="1"/>
</dbReference>
<dbReference type="SUPFAM" id="SSF88723">
    <property type="entry name" value="PIN domain-like"/>
    <property type="match status" value="1"/>
</dbReference>
<dbReference type="SUPFAM" id="SSF53098">
    <property type="entry name" value="Ribonuclease H-like"/>
    <property type="match status" value="1"/>
</dbReference>
<dbReference type="PROSITE" id="PS00447">
    <property type="entry name" value="DNA_POLYMERASE_A"/>
    <property type="match status" value="1"/>
</dbReference>
<proteinExistence type="inferred from homology"/>
<comment type="function">
    <text evidence="1">In addition to polymerase activity, this DNA polymerase exhibits 3'-5' and 5'-3' exonuclease activity.</text>
</comment>
<comment type="catalytic activity">
    <reaction>
        <text>DNA(n) + a 2'-deoxyribonucleoside 5'-triphosphate = DNA(n+1) + diphosphate</text>
        <dbReference type="Rhea" id="RHEA:22508"/>
        <dbReference type="Rhea" id="RHEA-COMP:17339"/>
        <dbReference type="Rhea" id="RHEA-COMP:17340"/>
        <dbReference type="ChEBI" id="CHEBI:33019"/>
        <dbReference type="ChEBI" id="CHEBI:61560"/>
        <dbReference type="ChEBI" id="CHEBI:173112"/>
        <dbReference type="EC" id="2.7.7.7"/>
    </reaction>
</comment>
<comment type="similarity">
    <text evidence="2">Belongs to the DNA polymerase type-A family.</text>
</comment>
<accession>O51498</accession>
<feature type="chain" id="PRO_0000101236" description="DNA polymerase I">
    <location>
        <begin position="1"/>
        <end position="908"/>
    </location>
</feature>
<feature type="domain" description="5'-3' exonuclease">
    <location>
        <begin position="1"/>
        <end position="318"/>
    </location>
</feature>
<feature type="domain" description="3'-5' exonuclease">
    <location>
        <begin position="319"/>
        <end position="531"/>
    </location>
</feature>
<feature type="region of interest" description="Polymerase">
    <location>
        <begin position="532"/>
        <end position="908"/>
    </location>
</feature>
<keyword id="KW-0227">DNA damage</keyword>
<keyword id="KW-0234">DNA repair</keyword>
<keyword id="KW-0235">DNA replication</keyword>
<keyword id="KW-0238">DNA-binding</keyword>
<keyword id="KW-0239">DNA-directed DNA polymerase</keyword>
<keyword id="KW-0269">Exonuclease</keyword>
<keyword id="KW-0378">Hydrolase</keyword>
<keyword id="KW-0540">Nuclease</keyword>
<keyword id="KW-0548">Nucleotidyltransferase</keyword>
<keyword id="KW-1185">Reference proteome</keyword>
<keyword id="KW-0808">Transferase</keyword>
<organism>
    <name type="scientific">Borreliella burgdorferi (strain ATCC 35210 / DSM 4680 / CIP 102532 / B31)</name>
    <name type="common">Borrelia burgdorferi</name>
    <dbReference type="NCBI Taxonomy" id="224326"/>
    <lineage>
        <taxon>Bacteria</taxon>
        <taxon>Pseudomonadati</taxon>
        <taxon>Spirochaetota</taxon>
        <taxon>Spirochaetia</taxon>
        <taxon>Spirochaetales</taxon>
        <taxon>Borreliaceae</taxon>
        <taxon>Borreliella</taxon>
    </lineage>
</organism>
<sequence length="908" mass="105504">MKELYLIDALNIIFRNYHVMKNYPLLNTQGENVNAFIGFFKTLFFIIKEKNPEHLIITFDSEVPTFRKQKYPSYKATRDLPPDDLIPQIGWIKEGLLKAKIPIFEMEGYEADDLLASFAKKAAKNNYLTYIISPDKDLLQTMSEYVKILKIENNSFIEMDNEYVTKKFGVNSFQIKDYLAIVGDRSDNIPGIKGIGAKGAANLLREFKTLDGIYSNLEIINKKHRELLIKEKENAFLSYELVSLEENLKIPEIENFALKNFSEEIISLFEKHSAIALIKTYKKDILKQEKENADQKSLFKQEPTTNSLDDINTIDTENVKYRSITTKIELDDLIESLKKAKYISIDTETSSLDTYTAKLIGISISFKEFEGYYIPIEAKGKIYIEKNYIIQKFNNLFESNPKIIGQNYKFDYKILKNNGFNPIPPYFDTMIAAYLIDTNSKVSLDFLAEKYLMHKNIKYEDVIQKNDNFANISLEMATSYSSEDADITFRLFNIFTKKLKEDKLDKLMHEIEMPFNKVIIEMEENGIYLDKEYLKEYGKELGKELEAIENEIIKSIGIDFNLNSPKQMHEILFEKLNLKLPEKMKKDSTDIKVLESLREQHESIENLIKYRQIAKLKSTYTDNLIELINYKTNRLHTSFIQTKTATGRITSINPNLQNIPIKDEKGRKIRKAFKPENGNIFISADYSQIELAILAHLSQDEVLIKAFENNKDIHTETASKLFKIEEKEITPNLRRIAKSINFGIIYRMSDFRLAKELGITKEEAKGFINSYFDSYPKIKEFIINQINFVRNAGYSETILKRRRYIKEINSNNYLERSAAERIAINSIIQGSAADIMKIAMVKVFNEFKSKKMESKILLQVHDEMLIESPIEEENEVKKILKIMMETAYTLNLPLRANIETGKSWGEIH</sequence>
<reference key="1">
    <citation type="journal article" date="1997" name="Nature">
        <title>Genomic sequence of a Lyme disease spirochaete, Borrelia burgdorferi.</title>
        <authorList>
            <person name="Fraser C.M."/>
            <person name="Casjens S."/>
            <person name="Huang W.M."/>
            <person name="Sutton G.G."/>
            <person name="Clayton R.A."/>
            <person name="Lathigra R."/>
            <person name="White O."/>
            <person name="Ketchum K.A."/>
            <person name="Dodson R.J."/>
            <person name="Hickey E.K."/>
            <person name="Gwinn M.L."/>
            <person name="Dougherty B.A."/>
            <person name="Tomb J.-F."/>
            <person name="Fleischmann R.D."/>
            <person name="Richardson D.L."/>
            <person name="Peterson J.D."/>
            <person name="Kerlavage A.R."/>
            <person name="Quackenbush J."/>
            <person name="Salzberg S.L."/>
            <person name="Hanson M."/>
            <person name="van Vugt R."/>
            <person name="Palmer N."/>
            <person name="Adams M.D."/>
            <person name="Gocayne J.D."/>
            <person name="Weidman J.F."/>
            <person name="Utterback T.R."/>
            <person name="Watthey L."/>
            <person name="McDonald L.A."/>
            <person name="Artiach P."/>
            <person name="Bowman C."/>
            <person name="Garland S.A."/>
            <person name="Fujii C."/>
            <person name="Cotton M.D."/>
            <person name="Horst K."/>
            <person name="Roberts K.M."/>
            <person name="Hatch B."/>
            <person name="Smith H.O."/>
            <person name="Venter J.C."/>
        </authorList>
    </citation>
    <scope>NUCLEOTIDE SEQUENCE [LARGE SCALE GENOMIC DNA]</scope>
    <source>
        <strain>ATCC 35210 / DSM 4680 / CIP 102532 / B31</strain>
    </source>
</reference>
<protein>
    <recommendedName>
        <fullName>DNA polymerase I</fullName>
        <shortName>POL I</shortName>
        <ecNumber>2.7.7.7</ecNumber>
    </recommendedName>
</protein>
<name>DPO1_BORBU</name>